<feature type="chain" id="PRO_1000002148" description="SsrA-binding protein">
    <location>
        <begin position="1"/>
        <end position="160"/>
    </location>
</feature>
<reference key="1">
    <citation type="journal article" date="2006" name="BMC Genomics">
        <title>Complete genome sequence of Shigella flexneri 5b and comparison with Shigella flexneri 2a.</title>
        <authorList>
            <person name="Nie H."/>
            <person name="Yang F."/>
            <person name="Zhang X."/>
            <person name="Yang J."/>
            <person name="Chen L."/>
            <person name="Wang J."/>
            <person name="Xiong Z."/>
            <person name="Peng J."/>
            <person name="Sun L."/>
            <person name="Dong J."/>
            <person name="Xue Y."/>
            <person name="Xu X."/>
            <person name="Chen S."/>
            <person name="Yao Z."/>
            <person name="Shen Y."/>
            <person name="Jin Q."/>
        </authorList>
    </citation>
    <scope>NUCLEOTIDE SEQUENCE [LARGE SCALE GENOMIC DNA]</scope>
    <source>
        <strain>8401</strain>
    </source>
</reference>
<organism>
    <name type="scientific">Shigella flexneri serotype 5b (strain 8401)</name>
    <dbReference type="NCBI Taxonomy" id="373384"/>
    <lineage>
        <taxon>Bacteria</taxon>
        <taxon>Pseudomonadati</taxon>
        <taxon>Pseudomonadota</taxon>
        <taxon>Gammaproteobacteria</taxon>
        <taxon>Enterobacterales</taxon>
        <taxon>Enterobacteriaceae</taxon>
        <taxon>Shigella</taxon>
    </lineage>
</organism>
<protein>
    <recommendedName>
        <fullName evidence="1">SsrA-binding protein</fullName>
    </recommendedName>
    <alternativeName>
        <fullName evidence="1">Small protein B</fullName>
    </alternativeName>
</protein>
<proteinExistence type="inferred from homology"/>
<gene>
    <name evidence="1" type="primary">smpB</name>
    <name type="ordered locus">SFV_2852</name>
</gene>
<sequence>MTKKKAHKPGSATIALNKRARHEYFIEEEFEAGLALQGWEVKSLRAGKANISDSYVLLRDGEAFLFGANITPMAVASTHVVCDPTRTRKLLLNQRELDSLYGRVNREGYTVVALSLYWKNAWCKVKIGVAKGKKQHDKRSDIKEREWQVDKARIMKNAHR</sequence>
<accession>Q0T186</accession>
<dbReference type="EMBL" id="CP000266">
    <property type="protein sequence ID" value="ABF04929.1"/>
    <property type="molecule type" value="Genomic_DNA"/>
</dbReference>
<dbReference type="RefSeq" id="WP_000162574.1">
    <property type="nucleotide sequence ID" value="NC_008258.1"/>
</dbReference>
<dbReference type="SMR" id="Q0T186"/>
<dbReference type="GeneID" id="93774470"/>
<dbReference type="KEGG" id="sfv:SFV_2852"/>
<dbReference type="HOGENOM" id="CLU_108953_3_0_6"/>
<dbReference type="Proteomes" id="UP000000659">
    <property type="component" value="Chromosome"/>
</dbReference>
<dbReference type="GO" id="GO:0005829">
    <property type="term" value="C:cytosol"/>
    <property type="evidence" value="ECO:0007669"/>
    <property type="project" value="TreeGrafter"/>
</dbReference>
<dbReference type="GO" id="GO:0003723">
    <property type="term" value="F:RNA binding"/>
    <property type="evidence" value="ECO:0007669"/>
    <property type="project" value="UniProtKB-UniRule"/>
</dbReference>
<dbReference type="GO" id="GO:0070929">
    <property type="term" value="P:trans-translation"/>
    <property type="evidence" value="ECO:0007669"/>
    <property type="project" value="UniProtKB-UniRule"/>
</dbReference>
<dbReference type="CDD" id="cd09294">
    <property type="entry name" value="SmpB"/>
    <property type="match status" value="1"/>
</dbReference>
<dbReference type="FunFam" id="2.40.280.10:FF:000001">
    <property type="entry name" value="SsrA-binding protein"/>
    <property type="match status" value="1"/>
</dbReference>
<dbReference type="Gene3D" id="2.40.280.10">
    <property type="match status" value="1"/>
</dbReference>
<dbReference type="HAMAP" id="MF_00023">
    <property type="entry name" value="SmpB"/>
    <property type="match status" value="1"/>
</dbReference>
<dbReference type="InterPro" id="IPR023620">
    <property type="entry name" value="SmpB"/>
</dbReference>
<dbReference type="InterPro" id="IPR000037">
    <property type="entry name" value="SsrA-bd_prot"/>
</dbReference>
<dbReference type="InterPro" id="IPR020081">
    <property type="entry name" value="SsrA-bd_prot_CS"/>
</dbReference>
<dbReference type="NCBIfam" id="NF003843">
    <property type="entry name" value="PRK05422.1"/>
    <property type="match status" value="1"/>
</dbReference>
<dbReference type="NCBIfam" id="TIGR00086">
    <property type="entry name" value="smpB"/>
    <property type="match status" value="1"/>
</dbReference>
<dbReference type="PANTHER" id="PTHR30308:SF2">
    <property type="entry name" value="SSRA-BINDING PROTEIN"/>
    <property type="match status" value="1"/>
</dbReference>
<dbReference type="PANTHER" id="PTHR30308">
    <property type="entry name" value="TMRNA-BINDING COMPONENT OF TRANS-TRANSLATION TAGGING COMPLEX"/>
    <property type="match status" value="1"/>
</dbReference>
<dbReference type="Pfam" id="PF01668">
    <property type="entry name" value="SmpB"/>
    <property type="match status" value="1"/>
</dbReference>
<dbReference type="SUPFAM" id="SSF74982">
    <property type="entry name" value="Small protein B (SmpB)"/>
    <property type="match status" value="1"/>
</dbReference>
<dbReference type="PROSITE" id="PS01317">
    <property type="entry name" value="SSRP"/>
    <property type="match status" value="1"/>
</dbReference>
<keyword id="KW-0963">Cytoplasm</keyword>
<keyword id="KW-0694">RNA-binding</keyword>
<name>SSRP_SHIF8</name>
<evidence type="ECO:0000255" key="1">
    <source>
        <dbReference type="HAMAP-Rule" id="MF_00023"/>
    </source>
</evidence>
<comment type="function">
    <text evidence="1">Required for rescue of stalled ribosomes mediated by trans-translation. Binds to transfer-messenger RNA (tmRNA), required for stable association of tmRNA with ribosomes. tmRNA and SmpB together mimic tRNA shape, replacing the anticodon stem-loop with SmpB. tmRNA is encoded by the ssrA gene; the 2 termini fold to resemble tRNA(Ala) and it encodes a 'tag peptide', a short internal open reading frame. During trans-translation Ala-aminoacylated tmRNA acts like a tRNA, entering the A-site of stalled ribosomes, displacing the stalled mRNA. The ribosome then switches to translate the ORF on the tmRNA; the nascent peptide is terminated with the 'tag peptide' encoded by the tmRNA and targeted for degradation. The ribosome is freed to recommence translation, which seems to be the essential function of trans-translation.</text>
</comment>
<comment type="subcellular location">
    <subcellularLocation>
        <location evidence="1">Cytoplasm</location>
    </subcellularLocation>
    <text evidence="1">The tmRNA-SmpB complex associates with stalled 70S ribosomes.</text>
</comment>
<comment type="similarity">
    <text evidence="1">Belongs to the SmpB family.</text>
</comment>